<evidence type="ECO:0000255" key="1">
    <source>
        <dbReference type="HAMAP-Rule" id="MF_01820"/>
    </source>
</evidence>
<evidence type="ECO:0000255" key="2">
    <source>
        <dbReference type="PROSITE-ProRule" id="PRU01058"/>
    </source>
</evidence>
<organism>
    <name type="scientific">Actinobacillus pleuropneumoniae serotype 7 (strain AP76)</name>
    <dbReference type="NCBI Taxonomy" id="537457"/>
    <lineage>
        <taxon>Bacteria</taxon>
        <taxon>Pseudomonadati</taxon>
        <taxon>Pseudomonadota</taxon>
        <taxon>Gammaproteobacteria</taxon>
        <taxon>Pasteurellales</taxon>
        <taxon>Pasteurellaceae</taxon>
        <taxon>Actinobacillus</taxon>
    </lineage>
</organism>
<comment type="function">
    <text evidence="1">One of several proteins that assist in the late maturation steps of the functional core of the 30S ribosomal subunit. Helps release RbfA from mature subunits. May play a role in the assembly of ribosomal proteins into the subunit. Circularly permuted GTPase that catalyzes slow GTP hydrolysis, GTPase activity is stimulated by the 30S ribosomal subunit.</text>
</comment>
<comment type="cofactor">
    <cofactor evidence="1">
        <name>Zn(2+)</name>
        <dbReference type="ChEBI" id="CHEBI:29105"/>
    </cofactor>
    <text evidence="1">Binds 1 zinc ion per subunit.</text>
</comment>
<comment type="subunit">
    <text evidence="1">Monomer. Associates with 30S ribosomal subunit, binds 16S rRNA.</text>
</comment>
<comment type="subcellular location">
    <subcellularLocation>
        <location evidence="1">Cytoplasm</location>
    </subcellularLocation>
</comment>
<comment type="similarity">
    <text evidence="1">Belongs to the TRAFAC class YlqF/YawG GTPase family. RsgA subfamily.</text>
</comment>
<proteinExistence type="inferred from homology"/>
<feature type="chain" id="PRO_1000188022" description="Small ribosomal subunit biogenesis GTPase RsgA">
    <location>
        <begin position="1"/>
        <end position="344"/>
    </location>
</feature>
<feature type="domain" description="CP-type G" evidence="2">
    <location>
        <begin position="100"/>
        <end position="268"/>
    </location>
</feature>
<feature type="binding site" evidence="1">
    <location>
        <begin position="156"/>
        <end position="159"/>
    </location>
    <ligand>
        <name>GTP</name>
        <dbReference type="ChEBI" id="CHEBI:37565"/>
    </ligand>
</feature>
<feature type="binding site" evidence="1">
    <location>
        <begin position="210"/>
        <end position="218"/>
    </location>
    <ligand>
        <name>GTP</name>
        <dbReference type="ChEBI" id="CHEBI:37565"/>
    </ligand>
</feature>
<feature type="binding site" evidence="1">
    <location>
        <position position="292"/>
    </location>
    <ligand>
        <name>Zn(2+)</name>
        <dbReference type="ChEBI" id="CHEBI:29105"/>
    </ligand>
</feature>
<feature type="binding site" evidence="1">
    <location>
        <position position="297"/>
    </location>
    <ligand>
        <name>Zn(2+)</name>
        <dbReference type="ChEBI" id="CHEBI:29105"/>
    </ligand>
</feature>
<feature type="binding site" evidence="1">
    <location>
        <position position="299"/>
    </location>
    <ligand>
        <name>Zn(2+)</name>
        <dbReference type="ChEBI" id="CHEBI:29105"/>
    </ligand>
</feature>
<feature type="binding site" evidence="1">
    <location>
        <position position="305"/>
    </location>
    <ligand>
        <name>Zn(2+)</name>
        <dbReference type="ChEBI" id="CHEBI:29105"/>
    </ligand>
</feature>
<protein>
    <recommendedName>
        <fullName evidence="1">Small ribosomal subunit biogenesis GTPase RsgA</fullName>
        <ecNumber evidence="1">3.6.1.-</ecNumber>
    </recommendedName>
</protein>
<gene>
    <name evidence="1" type="primary">rsgA</name>
    <name type="ordered locus">APP7_0132</name>
</gene>
<name>RSGA_ACTP7</name>
<keyword id="KW-0963">Cytoplasm</keyword>
<keyword id="KW-0342">GTP-binding</keyword>
<keyword id="KW-0378">Hydrolase</keyword>
<keyword id="KW-0479">Metal-binding</keyword>
<keyword id="KW-0547">Nucleotide-binding</keyword>
<keyword id="KW-0690">Ribosome biogenesis</keyword>
<keyword id="KW-0694">RNA-binding</keyword>
<keyword id="KW-0699">rRNA-binding</keyword>
<keyword id="KW-0862">Zinc</keyword>
<sequence>MSKRRLTQNQQRRIKSNHHKKIAKPELEWQDEMLGEVQQGIVVTRHAKHADVETEQGEIYRCNLRRTLKNVVVGDQVSWRKGNEQLQGISGVIEAIYPRKNELSRPDYYDGIKVMAANIDQIIIVSAVLPTLSLNIIDRYLVICETAKIPALIVLNKIDLLSESERQEVQKQLAIYENIGYETLCLSADTGENMEKLDRYLSRGTSIFVGQSGVGKSSLINQLLPEVNALTGAVSDISGLGQHTTTSSRLYHLPQGGNLIDSPGIREFGLWHLEPEQITLGYREFQSVLGTCKFRDCKHKSDPGCAVREAVEKGEINAIRFENYHRLIESRDETKSQRHFRTEE</sequence>
<dbReference type="EC" id="3.6.1.-" evidence="1"/>
<dbReference type="EMBL" id="CP001091">
    <property type="protein sequence ID" value="ACE60784.1"/>
    <property type="molecule type" value="Genomic_DNA"/>
</dbReference>
<dbReference type="RefSeq" id="WP_005600146.1">
    <property type="nucleotide sequence ID" value="NC_010939.1"/>
</dbReference>
<dbReference type="SMR" id="B3GZX2"/>
<dbReference type="KEGG" id="apa:APP7_0132"/>
<dbReference type="HOGENOM" id="CLU_033617_2_0_6"/>
<dbReference type="Proteomes" id="UP000001226">
    <property type="component" value="Chromosome"/>
</dbReference>
<dbReference type="GO" id="GO:0005737">
    <property type="term" value="C:cytoplasm"/>
    <property type="evidence" value="ECO:0007669"/>
    <property type="project" value="UniProtKB-SubCell"/>
</dbReference>
<dbReference type="GO" id="GO:0005525">
    <property type="term" value="F:GTP binding"/>
    <property type="evidence" value="ECO:0007669"/>
    <property type="project" value="UniProtKB-UniRule"/>
</dbReference>
<dbReference type="GO" id="GO:0003924">
    <property type="term" value="F:GTPase activity"/>
    <property type="evidence" value="ECO:0007669"/>
    <property type="project" value="UniProtKB-UniRule"/>
</dbReference>
<dbReference type="GO" id="GO:0046872">
    <property type="term" value="F:metal ion binding"/>
    <property type="evidence" value="ECO:0007669"/>
    <property type="project" value="UniProtKB-KW"/>
</dbReference>
<dbReference type="GO" id="GO:0019843">
    <property type="term" value="F:rRNA binding"/>
    <property type="evidence" value="ECO:0007669"/>
    <property type="project" value="UniProtKB-KW"/>
</dbReference>
<dbReference type="GO" id="GO:0042274">
    <property type="term" value="P:ribosomal small subunit biogenesis"/>
    <property type="evidence" value="ECO:0007669"/>
    <property type="project" value="UniProtKB-UniRule"/>
</dbReference>
<dbReference type="CDD" id="cd01854">
    <property type="entry name" value="YjeQ_EngC"/>
    <property type="match status" value="1"/>
</dbReference>
<dbReference type="Gene3D" id="2.40.50.140">
    <property type="entry name" value="Nucleic acid-binding proteins"/>
    <property type="match status" value="1"/>
</dbReference>
<dbReference type="Gene3D" id="3.40.50.300">
    <property type="entry name" value="P-loop containing nucleotide triphosphate hydrolases"/>
    <property type="match status" value="1"/>
</dbReference>
<dbReference type="Gene3D" id="1.10.40.50">
    <property type="entry name" value="Probable gtpase engc, domain 3"/>
    <property type="match status" value="1"/>
</dbReference>
<dbReference type="HAMAP" id="MF_01820">
    <property type="entry name" value="GTPase_RsgA"/>
    <property type="match status" value="1"/>
</dbReference>
<dbReference type="InterPro" id="IPR030378">
    <property type="entry name" value="G_CP_dom"/>
</dbReference>
<dbReference type="InterPro" id="IPR012340">
    <property type="entry name" value="NA-bd_OB-fold"/>
</dbReference>
<dbReference type="InterPro" id="IPR027417">
    <property type="entry name" value="P-loop_NTPase"/>
</dbReference>
<dbReference type="InterPro" id="IPR004881">
    <property type="entry name" value="Ribosome_biogen_GTPase_RsgA"/>
</dbReference>
<dbReference type="InterPro" id="IPR010914">
    <property type="entry name" value="RsgA_GTPase_dom"/>
</dbReference>
<dbReference type="NCBIfam" id="NF008931">
    <property type="entry name" value="PRK12288.1"/>
    <property type="match status" value="1"/>
</dbReference>
<dbReference type="NCBIfam" id="TIGR00157">
    <property type="entry name" value="ribosome small subunit-dependent GTPase A"/>
    <property type="match status" value="1"/>
</dbReference>
<dbReference type="PANTHER" id="PTHR32120">
    <property type="entry name" value="SMALL RIBOSOMAL SUBUNIT BIOGENESIS GTPASE RSGA"/>
    <property type="match status" value="1"/>
</dbReference>
<dbReference type="PANTHER" id="PTHR32120:SF11">
    <property type="entry name" value="SMALL RIBOSOMAL SUBUNIT BIOGENESIS GTPASE RSGA 1, MITOCHONDRIAL-RELATED"/>
    <property type="match status" value="1"/>
</dbReference>
<dbReference type="Pfam" id="PF03193">
    <property type="entry name" value="RsgA_GTPase"/>
    <property type="match status" value="1"/>
</dbReference>
<dbReference type="SUPFAM" id="SSF52540">
    <property type="entry name" value="P-loop containing nucleoside triphosphate hydrolases"/>
    <property type="match status" value="1"/>
</dbReference>
<dbReference type="PROSITE" id="PS50936">
    <property type="entry name" value="ENGC_GTPASE"/>
    <property type="match status" value="1"/>
</dbReference>
<dbReference type="PROSITE" id="PS51721">
    <property type="entry name" value="G_CP"/>
    <property type="match status" value="1"/>
</dbReference>
<accession>B3GZX2</accession>
<reference key="1">
    <citation type="submission" date="2008-06" db="EMBL/GenBank/DDBJ databases">
        <title>Genome and proteome analysis of A. pleuropneumoniae serotype 7.</title>
        <authorList>
            <person name="Linke B."/>
            <person name="Buettner F."/>
            <person name="Martinez-Arias R."/>
            <person name="Goesmann A."/>
            <person name="Baltes N."/>
            <person name="Tegetmeyer H."/>
            <person name="Singh M."/>
            <person name="Gerlach G.F."/>
        </authorList>
    </citation>
    <scope>NUCLEOTIDE SEQUENCE [LARGE SCALE GENOMIC DNA]</scope>
    <source>
        <strain>AP76</strain>
    </source>
</reference>